<reference key="1">
    <citation type="journal article" date="2007" name="J. Bacteriol.">
        <title>Whole-genome analysis of the methyl tert-butyl ether-degrading beta-proteobacterium Methylibium petroleiphilum PM1.</title>
        <authorList>
            <person name="Kane S.R."/>
            <person name="Chakicherla A.Y."/>
            <person name="Chain P.S.G."/>
            <person name="Schmidt R."/>
            <person name="Shin M.W."/>
            <person name="Legler T.C."/>
            <person name="Scow K.M."/>
            <person name="Larimer F.W."/>
            <person name="Lucas S.M."/>
            <person name="Richardson P.M."/>
            <person name="Hristova K.R."/>
        </authorList>
    </citation>
    <scope>NUCLEOTIDE SEQUENCE [LARGE SCALE GENOMIC DNA]</scope>
    <source>
        <strain>ATCC BAA-1232 / LMG 22953 / PM1</strain>
    </source>
</reference>
<keyword id="KW-0143">Chaperone</keyword>
<keyword id="KW-0963">Cytoplasm</keyword>
<keyword id="KW-0533">Nickel</keyword>
<keyword id="KW-0996">Nickel insertion</keyword>
<keyword id="KW-1185">Reference proteome</keyword>
<feature type="chain" id="PRO_1000083898" description="Urease accessory protein UreE">
    <location>
        <begin position="1"/>
        <end position="217"/>
    </location>
</feature>
<feature type="region of interest" description="Disordered" evidence="2">
    <location>
        <begin position="148"/>
        <end position="217"/>
    </location>
</feature>
<feature type="compositionally biased region" description="Basic and acidic residues" evidence="2">
    <location>
        <begin position="160"/>
        <end position="171"/>
    </location>
</feature>
<feature type="compositionally biased region" description="Low complexity" evidence="2">
    <location>
        <begin position="193"/>
        <end position="202"/>
    </location>
</feature>
<feature type="compositionally biased region" description="Basic and acidic residues" evidence="2">
    <location>
        <begin position="206"/>
        <end position="217"/>
    </location>
</feature>
<sequence length="217" mass="22936">MLTLNKLLARGAGLAPALLKRAATVELDWDVRQKSRFDATDSQGRALGVFLPRGSVVRGGDVLVAEDGSLVRVIAAPQSVLVVRHCSEHGSAFDLLRAAYHLGNRHVPLELQPDRLQLEPDHVLADMLRAMHLIVSEAQAPFEPESGAYGEAAAHGHGHAGHDHAHDHDHGPAQASTPAPTPRGRPVGVAIKAAAPAPHVHGPGCGHDHDHGSGHHH</sequence>
<dbReference type="EMBL" id="CP000555">
    <property type="protein sequence ID" value="ABM93627.1"/>
    <property type="molecule type" value="Genomic_DNA"/>
</dbReference>
<dbReference type="RefSeq" id="WP_011828265.1">
    <property type="nucleotide sequence ID" value="NC_008825.1"/>
</dbReference>
<dbReference type="SMR" id="A2SDI8"/>
<dbReference type="STRING" id="420662.Mpe_A0665"/>
<dbReference type="KEGG" id="mpt:Mpe_A0665"/>
<dbReference type="eggNOG" id="COG2371">
    <property type="taxonomic scope" value="Bacteria"/>
</dbReference>
<dbReference type="HOGENOM" id="CLU_093757_0_0_4"/>
<dbReference type="Proteomes" id="UP000000366">
    <property type="component" value="Chromosome"/>
</dbReference>
<dbReference type="GO" id="GO:0005737">
    <property type="term" value="C:cytoplasm"/>
    <property type="evidence" value="ECO:0007669"/>
    <property type="project" value="UniProtKB-SubCell"/>
</dbReference>
<dbReference type="GO" id="GO:0016151">
    <property type="term" value="F:nickel cation binding"/>
    <property type="evidence" value="ECO:0007669"/>
    <property type="project" value="UniProtKB-UniRule"/>
</dbReference>
<dbReference type="GO" id="GO:0051082">
    <property type="term" value="F:unfolded protein binding"/>
    <property type="evidence" value="ECO:0007669"/>
    <property type="project" value="UniProtKB-UniRule"/>
</dbReference>
<dbReference type="GO" id="GO:0006457">
    <property type="term" value="P:protein folding"/>
    <property type="evidence" value="ECO:0007669"/>
    <property type="project" value="InterPro"/>
</dbReference>
<dbReference type="GO" id="GO:0065003">
    <property type="term" value="P:protein-containing complex assembly"/>
    <property type="evidence" value="ECO:0007669"/>
    <property type="project" value="InterPro"/>
</dbReference>
<dbReference type="GO" id="GO:0019627">
    <property type="term" value="P:urea metabolic process"/>
    <property type="evidence" value="ECO:0007669"/>
    <property type="project" value="InterPro"/>
</dbReference>
<dbReference type="CDD" id="cd00571">
    <property type="entry name" value="UreE"/>
    <property type="match status" value="1"/>
</dbReference>
<dbReference type="Gene3D" id="2.60.260.20">
    <property type="entry name" value="Urease metallochaperone UreE, N-terminal domain"/>
    <property type="match status" value="1"/>
</dbReference>
<dbReference type="Gene3D" id="3.30.70.790">
    <property type="entry name" value="UreE, C-terminal domain"/>
    <property type="match status" value="1"/>
</dbReference>
<dbReference type="HAMAP" id="MF_00822">
    <property type="entry name" value="UreE"/>
    <property type="match status" value="1"/>
</dbReference>
<dbReference type="InterPro" id="IPR012406">
    <property type="entry name" value="UreE"/>
</dbReference>
<dbReference type="InterPro" id="IPR007864">
    <property type="entry name" value="UreE_C_dom"/>
</dbReference>
<dbReference type="InterPro" id="IPR004029">
    <property type="entry name" value="UreE_N"/>
</dbReference>
<dbReference type="InterPro" id="IPR036118">
    <property type="entry name" value="UreE_N_sf"/>
</dbReference>
<dbReference type="NCBIfam" id="NF009751">
    <property type="entry name" value="PRK13261.1-1"/>
    <property type="match status" value="1"/>
</dbReference>
<dbReference type="NCBIfam" id="NF009762">
    <property type="entry name" value="PRK13263.1"/>
    <property type="match status" value="1"/>
</dbReference>
<dbReference type="Pfam" id="PF05194">
    <property type="entry name" value="UreE_C"/>
    <property type="match status" value="1"/>
</dbReference>
<dbReference type="Pfam" id="PF02814">
    <property type="entry name" value="UreE_N"/>
    <property type="match status" value="1"/>
</dbReference>
<dbReference type="SMART" id="SM00988">
    <property type="entry name" value="UreE_N"/>
    <property type="match status" value="1"/>
</dbReference>
<dbReference type="SUPFAM" id="SSF69737">
    <property type="entry name" value="Urease metallochaperone UreE, C-terminal domain"/>
    <property type="match status" value="1"/>
</dbReference>
<dbReference type="SUPFAM" id="SSF69287">
    <property type="entry name" value="Urease metallochaperone UreE, N-terminal domain"/>
    <property type="match status" value="1"/>
</dbReference>
<protein>
    <recommendedName>
        <fullName evidence="1">Urease accessory protein UreE</fullName>
    </recommendedName>
</protein>
<name>UREE_METPP</name>
<organism>
    <name type="scientific">Methylibium petroleiphilum (strain ATCC BAA-1232 / LMG 22953 / PM1)</name>
    <dbReference type="NCBI Taxonomy" id="420662"/>
    <lineage>
        <taxon>Bacteria</taxon>
        <taxon>Pseudomonadati</taxon>
        <taxon>Pseudomonadota</taxon>
        <taxon>Betaproteobacteria</taxon>
        <taxon>Burkholderiales</taxon>
        <taxon>Sphaerotilaceae</taxon>
        <taxon>Methylibium</taxon>
    </lineage>
</organism>
<evidence type="ECO:0000255" key="1">
    <source>
        <dbReference type="HAMAP-Rule" id="MF_00822"/>
    </source>
</evidence>
<evidence type="ECO:0000256" key="2">
    <source>
        <dbReference type="SAM" id="MobiDB-lite"/>
    </source>
</evidence>
<gene>
    <name evidence="1" type="primary">ureE</name>
    <name type="ordered locus">Mpe_A0665</name>
</gene>
<accession>A2SDI8</accession>
<proteinExistence type="inferred from homology"/>
<comment type="function">
    <text evidence="1">Involved in urease metallocenter assembly. Binds nickel. Probably functions as a nickel donor during metallocenter assembly.</text>
</comment>
<comment type="subcellular location">
    <subcellularLocation>
        <location evidence="1">Cytoplasm</location>
    </subcellularLocation>
</comment>
<comment type="similarity">
    <text evidence="1">Belongs to the UreE family.</text>
</comment>